<gene>
    <name evidence="1" type="primary">carS</name>
    <name type="ordered locus">MTH_832</name>
</gene>
<protein>
    <recommendedName>
        <fullName evidence="1">CDP-archaeol synthase</fullName>
        <ecNumber evidence="1">2.7.7.67</ecNumber>
    </recommendedName>
    <alternativeName>
        <fullName evidence="1">CDP-2,3-bis-(O-geranylgeranyl)-sn-glycerol synthase</fullName>
    </alternativeName>
</protein>
<sequence>MNTDIINIIDVLYVIYFMLPAYMANISGLVFGGGKPLDMGITLADGRRLIGDGVTWRGTAAGTFVGLVVGIIQGLLSGSIIIGVITGLLLGFGALMGDAAGSFIKRRLKIDRGRPAPILDQLDFVFGALILVSPIVVLPIDYIILIMLITLVLHLSANIIAYLLGMKDVWY</sequence>
<comment type="function">
    <text evidence="1">Catalyzes the formation of CDP-2,3-bis-(O-geranylgeranyl)-sn-glycerol (CDP-archaeol) from 2,3-bis-(O-geranylgeranyl)-sn-glycerol 1-phosphate (DGGGP) and CTP. This reaction is the third ether-bond-formation step in the biosynthesis of archaeal membrane lipids.</text>
</comment>
<comment type="catalytic activity">
    <reaction evidence="1">
        <text>2,3-bis-O-(geranylgeranyl)-sn-glycerol 1-phosphate + CTP + H(+) = CDP-2,3-bis-O-(geranylgeranyl)-sn-glycerol + diphosphate</text>
        <dbReference type="Rhea" id="RHEA:25690"/>
        <dbReference type="ChEBI" id="CHEBI:15378"/>
        <dbReference type="ChEBI" id="CHEBI:33019"/>
        <dbReference type="ChEBI" id="CHEBI:37563"/>
        <dbReference type="ChEBI" id="CHEBI:58837"/>
        <dbReference type="ChEBI" id="CHEBI:58838"/>
        <dbReference type="EC" id="2.7.7.67"/>
    </reaction>
</comment>
<comment type="cofactor">
    <cofactor evidence="1">
        <name>Mg(2+)</name>
        <dbReference type="ChEBI" id="CHEBI:18420"/>
    </cofactor>
</comment>
<comment type="pathway">
    <text evidence="1">Membrane lipid metabolism; glycerophospholipid metabolism.</text>
</comment>
<comment type="subcellular location">
    <subcellularLocation>
        <location evidence="1">Cell membrane</location>
        <topology evidence="1">Multi-pass membrane protein</topology>
    </subcellularLocation>
</comment>
<comment type="similarity">
    <text evidence="1">Belongs to the CDP-archaeol synthase family.</text>
</comment>
<comment type="sequence caution" evidence="2">
    <conflict type="erroneous initiation">
        <sequence resource="EMBL-CDS" id="AAB85330"/>
    </conflict>
</comment>
<evidence type="ECO:0000255" key="1">
    <source>
        <dbReference type="HAMAP-Rule" id="MF_01117"/>
    </source>
</evidence>
<evidence type="ECO:0000305" key="2"/>
<reference key="1">
    <citation type="journal article" date="1997" name="J. Bacteriol.">
        <title>Complete genome sequence of Methanobacterium thermoautotrophicum deltaH: functional analysis and comparative genomics.</title>
        <authorList>
            <person name="Smith D.R."/>
            <person name="Doucette-Stamm L.A."/>
            <person name="Deloughery C."/>
            <person name="Lee H.-M."/>
            <person name="Dubois J."/>
            <person name="Aldredge T."/>
            <person name="Bashirzadeh R."/>
            <person name="Blakely D."/>
            <person name="Cook R."/>
            <person name="Gilbert K."/>
            <person name="Harrison D."/>
            <person name="Hoang L."/>
            <person name="Keagle P."/>
            <person name="Lumm W."/>
            <person name="Pothier B."/>
            <person name="Qiu D."/>
            <person name="Spadafora R."/>
            <person name="Vicare R."/>
            <person name="Wang Y."/>
            <person name="Wierzbowski J."/>
            <person name="Gibson R."/>
            <person name="Jiwani N."/>
            <person name="Caruso A."/>
            <person name="Bush D."/>
            <person name="Safer H."/>
            <person name="Patwell D."/>
            <person name="Prabhakar S."/>
            <person name="McDougall S."/>
            <person name="Shimer G."/>
            <person name="Goyal A."/>
            <person name="Pietrovski S."/>
            <person name="Church G.M."/>
            <person name="Daniels C.J."/>
            <person name="Mao J.-I."/>
            <person name="Rice P."/>
            <person name="Noelling J."/>
            <person name="Reeve J.N."/>
        </authorList>
    </citation>
    <scope>NUCLEOTIDE SEQUENCE [LARGE SCALE GENOMIC DNA]</scope>
    <source>
        <strain>ATCC 29096 / DSM 1053 / JCM 10044 / NBRC 100330 / Delta H</strain>
    </source>
</reference>
<proteinExistence type="inferred from homology"/>
<keyword id="KW-1003">Cell membrane</keyword>
<keyword id="KW-0444">Lipid biosynthesis</keyword>
<keyword id="KW-0443">Lipid metabolism</keyword>
<keyword id="KW-0460">Magnesium</keyword>
<keyword id="KW-0472">Membrane</keyword>
<keyword id="KW-0594">Phospholipid biosynthesis</keyword>
<keyword id="KW-1208">Phospholipid metabolism</keyword>
<keyword id="KW-1185">Reference proteome</keyword>
<keyword id="KW-0808">Transferase</keyword>
<keyword id="KW-0812">Transmembrane</keyword>
<keyword id="KW-1133">Transmembrane helix</keyword>
<name>CDPAS_METTH</name>
<dbReference type="EC" id="2.7.7.67" evidence="1"/>
<dbReference type="EMBL" id="AE000666">
    <property type="protein sequence ID" value="AAB85330.1"/>
    <property type="status" value="ALT_INIT"/>
    <property type="molecule type" value="Genomic_DNA"/>
</dbReference>
<dbReference type="PIR" id="A69211">
    <property type="entry name" value="A69211"/>
</dbReference>
<dbReference type="RefSeq" id="WP_048060908.1">
    <property type="nucleotide sequence ID" value="NC_000916.1"/>
</dbReference>
<dbReference type="SMR" id="O26920"/>
<dbReference type="FunCoup" id="O26920">
    <property type="interactions" value="1"/>
</dbReference>
<dbReference type="STRING" id="187420.MTH_832"/>
<dbReference type="PaxDb" id="187420-MTH_832"/>
<dbReference type="EnsemblBacteria" id="AAB85330">
    <property type="protein sequence ID" value="AAB85330"/>
    <property type="gene ID" value="MTH_832"/>
</dbReference>
<dbReference type="GeneID" id="1471240"/>
<dbReference type="KEGG" id="mth:MTH_832"/>
<dbReference type="PATRIC" id="fig|187420.15.peg.815"/>
<dbReference type="HOGENOM" id="CLU_105710_0_0_2"/>
<dbReference type="InParanoid" id="O26920"/>
<dbReference type="BioCyc" id="MetaCyc:MONOMER-14510"/>
<dbReference type="UniPathway" id="UPA00940"/>
<dbReference type="Proteomes" id="UP000005223">
    <property type="component" value="Chromosome"/>
</dbReference>
<dbReference type="GO" id="GO:0005886">
    <property type="term" value="C:plasma membrane"/>
    <property type="evidence" value="ECO:0007669"/>
    <property type="project" value="UniProtKB-SubCell"/>
</dbReference>
<dbReference type="GO" id="GO:0043338">
    <property type="term" value="F:CDP-2,3-bis-(O-geranylgeranyl)-sn-glycerol synthase activity"/>
    <property type="evidence" value="ECO:0007669"/>
    <property type="project" value="UniProtKB-EC"/>
</dbReference>
<dbReference type="GO" id="GO:0046474">
    <property type="term" value="P:glycerophospholipid biosynthetic process"/>
    <property type="evidence" value="ECO:0007669"/>
    <property type="project" value="UniProtKB-UniRule"/>
</dbReference>
<dbReference type="HAMAP" id="MF_01117">
    <property type="entry name" value="CDP_archaeol_synth"/>
    <property type="match status" value="1"/>
</dbReference>
<dbReference type="InterPro" id="IPR032690">
    <property type="entry name" value="CarS"/>
</dbReference>
<dbReference type="InterPro" id="IPR002726">
    <property type="entry name" value="CarS_archaea"/>
</dbReference>
<dbReference type="NCBIfam" id="NF003114">
    <property type="entry name" value="PRK04032.1"/>
    <property type="match status" value="1"/>
</dbReference>
<dbReference type="PANTHER" id="PTHR39650">
    <property type="entry name" value="CDP-ARCHAEOL SYNTHASE"/>
    <property type="match status" value="1"/>
</dbReference>
<dbReference type="PANTHER" id="PTHR39650:SF1">
    <property type="entry name" value="CDP-ARCHAEOL SYNTHASE"/>
    <property type="match status" value="1"/>
</dbReference>
<dbReference type="Pfam" id="PF01864">
    <property type="entry name" value="CarS-like"/>
    <property type="match status" value="1"/>
</dbReference>
<organism>
    <name type="scientific">Methanothermobacter thermautotrophicus (strain ATCC 29096 / DSM 1053 / JCM 10044 / NBRC 100330 / Delta H)</name>
    <name type="common">Methanobacterium thermoautotrophicum</name>
    <dbReference type="NCBI Taxonomy" id="187420"/>
    <lineage>
        <taxon>Archaea</taxon>
        <taxon>Methanobacteriati</taxon>
        <taxon>Methanobacteriota</taxon>
        <taxon>Methanomada group</taxon>
        <taxon>Methanobacteria</taxon>
        <taxon>Methanobacteriales</taxon>
        <taxon>Methanobacteriaceae</taxon>
        <taxon>Methanothermobacter</taxon>
    </lineage>
</organism>
<feature type="chain" id="PRO_0000094173" description="CDP-archaeol synthase">
    <location>
        <begin position="1"/>
        <end position="171"/>
    </location>
</feature>
<feature type="transmembrane region" description="Helical" evidence="1">
    <location>
        <begin position="11"/>
        <end position="31"/>
    </location>
</feature>
<feature type="transmembrane region" description="Helical" evidence="1">
    <location>
        <begin position="65"/>
        <end position="85"/>
    </location>
</feature>
<feature type="transmembrane region" description="Helical" evidence="1">
    <location>
        <begin position="129"/>
        <end position="149"/>
    </location>
</feature>
<feature type="transmembrane region" description="Helical" evidence="1">
    <location>
        <begin position="151"/>
        <end position="171"/>
    </location>
</feature>
<accession>O26920</accession>